<dbReference type="EMBL" id="AK124893">
    <property type="protein sequence ID" value="BAC85983.1"/>
    <property type="molecule type" value="mRNA"/>
</dbReference>
<dbReference type="EMBL" id="AC013480">
    <property type="status" value="NOT_ANNOTATED_CDS"/>
    <property type="molecule type" value="Genomic_DNA"/>
</dbReference>
<dbReference type="EMBL" id="AC104654">
    <property type="status" value="NOT_ANNOTATED_CDS"/>
    <property type="molecule type" value="Genomic_DNA"/>
</dbReference>
<dbReference type="RefSeq" id="NP_001229744.1">
    <property type="nucleotide sequence ID" value="NM_001242815.1"/>
</dbReference>
<dbReference type="STRING" id="9606.ENSP00000497028"/>
<dbReference type="GlyGen" id="Q6ZV80">
    <property type="glycosylation" value="1 site"/>
</dbReference>
<dbReference type="BioMuta" id="C2orf91"/>
<dbReference type="MassIVE" id="Q6ZV80"/>
<dbReference type="PaxDb" id="9606-ENSP00000367983"/>
<dbReference type="PeptideAtlas" id="Q6ZV80"/>
<dbReference type="UCSC" id="uc002rsf.1">
    <property type="organism name" value="human"/>
</dbReference>
<dbReference type="AGR" id="HGNC:42966"/>
<dbReference type="GeneCards" id="LINC02898"/>
<dbReference type="HGNC" id="HGNC:42966">
    <property type="gene designation" value="LINC02898"/>
</dbReference>
<dbReference type="neXtProt" id="NX_Q6ZV80"/>
<dbReference type="eggNOG" id="ENOG502TH6D">
    <property type="taxonomic scope" value="Eukaryota"/>
</dbReference>
<dbReference type="HOGENOM" id="CLU_135099_0_0_1"/>
<dbReference type="InParanoid" id="Q6ZV80"/>
<dbReference type="PAN-GO" id="Q6ZV80">
    <property type="GO annotations" value="0 GO annotations based on evolutionary models"/>
</dbReference>
<dbReference type="PhylomeDB" id="Q6ZV80"/>
<dbReference type="TreeFam" id="TF353601"/>
<dbReference type="PathwayCommons" id="Q6ZV80"/>
<dbReference type="SignaLink" id="Q6ZV80"/>
<dbReference type="BioGRID-ORCS" id="400950">
    <property type="hits" value="8 hits in 1110 CRISPR screens"/>
</dbReference>
<dbReference type="ChiTaRS" id="C2orf91">
    <property type="organism name" value="human"/>
</dbReference>
<dbReference type="GenomeRNAi" id="400950"/>
<dbReference type="Pharos" id="Q6ZV80">
    <property type="development level" value="Tdark"/>
</dbReference>
<dbReference type="Proteomes" id="UP000005640">
    <property type="component" value="Unplaced"/>
</dbReference>
<dbReference type="RNAct" id="Q6ZV80">
    <property type="molecule type" value="protein"/>
</dbReference>
<dbReference type="InterPro" id="IPR040735">
    <property type="entry name" value="DUF5583"/>
</dbReference>
<dbReference type="Pfam" id="PF17821">
    <property type="entry name" value="DUF5583"/>
    <property type="match status" value="1"/>
</dbReference>
<comment type="caution">
    <text evidence="2">Product of a dubious gene prediction.</text>
</comment>
<gene>
    <name evidence="3" type="primary">LINC02898</name>
    <name evidence="3" type="synonym">C2orf91</name>
</gene>
<evidence type="ECO:0000256" key="1">
    <source>
        <dbReference type="SAM" id="MobiDB-lite"/>
    </source>
</evidence>
<evidence type="ECO:0000305" key="2"/>
<evidence type="ECO:0000312" key="3">
    <source>
        <dbReference type="HGNC" id="HGNC:42966"/>
    </source>
</evidence>
<organism>
    <name type="scientific">Homo sapiens</name>
    <name type="common">Human</name>
    <dbReference type="NCBI Taxonomy" id="9606"/>
    <lineage>
        <taxon>Eukaryota</taxon>
        <taxon>Metazoa</taxon>
        <taxon>Chordata</taxon>
        <taxon>Craniata</taxon>
        <taxon>Vertebrata</taxon>
        <taxon>Euteleostomi</taxon>
        <taxon>Mammalia</taxon>
        <taxon>Eutheria</taxon>
        <taxon>Euarchontoglires</taxon>
        <taxon>Primates</taxon>
        <taxon>Haplorrhini</taxon>
        <taxon>Catarrhini</taxon>
        <taxon>Hominidae</taxon>
        <taxon>Homo</taxon>
    </lineage>
</organism>
<keyword id="KW-1185">Reference proteome</keyword>
<protein>
    <recommendedName>
        <fullName evidence="2">Putative uncharacterized protein LINC02898</fullName>
    </recommendedName>
    <alternativeName>
        <fullName evidence="3">Long intergenic non-protein coding RNA 2898</fullName>
    </alternativeName>
</protein>
<reference key="1">
    <citation type="journal article" date="2004" name="Nat. Genet.">
        <title>Complete sequencing and characterization of 21,243 full-length human cDNAs.</title>
        <authorList>
            <person name="Ota T."/>
            <person name="Suzuki Y."/>
            <person name="Nishikawa T."/>
            <person name="Otsuki T."/>
            <person name="Sugiyama T."/>
            <person name="Irie R."/>
            <person name="Wakamatsu A."/>
            <person name="Hayashi K."/>
            <person name="Sato H."/>
            <person name="Nagai K."/>
            <person name="Kimura K."/>
            <person name="Makita H."/>
            <person name="Sekine M."/>
            <person name="Obayashi M."/>
            <person name="Nishi T."/>
            <person name="Shibahara T."/>
            <person name="Tanaka T."/>
            <person name="Ishii S."/>
            <person name="Yamamoto J."/>
            <person name="Saito K."/>
            <person name="Kawai Y."/>
            <person name="Isono Y."/>
            <person name="Nakamura Y."/>
            <person name="Nagahari K."/>
            <person name="Murakami K."/>
            <person name="Yasuda T."/>
            <person name="Iwayanagi T."/>
            <person name="Wagatsuma M."/>
            <person name="Shiratori A."/>
            <person name="Sudo H."/>
            <person name="Hosoiri T."/>
            <person name="Kaku Y."/>
            <person name="Kodaira H."/>
            <person name="Kondo H."/>
            <person name="Sugawara M."/>
            <person name="Takahashi M."/>
            <person name="Kanda K."/>
            <person name="Yokoi T."/>
            <person name="Furuya T."/>
            <person name="Kikkawa E."/>
            <person name="Omura Y."/>
            <person name="Abe K."/>
            <person name="Kamihara K."/>
            <person name="Katsuta N."/>
            <person name="Sato K."/>
            <person name="Tanikawa M."/>
            <person name="Yamazaki M."/>
            <person name="Ninomiya K."/>
            <person name="Ishibashi T."/>
            <person name="Yamashita H."/>
            <person name="Murakawa K."/>
            <person name="Fujimori K."/>
            <person name="Tanai H."/>
            <person name="Kimata M."/>
            <person name="Watanabe M."/>
            <person name="Hiraoka S."/>
            <person name="Chiba Y."/>
            <person name="Ishida S."/>
            <person name="Ono Y."/>
            <person name="Takiguchi S."/>
            <person name="Watanabe S."/>
            <person name="Yosida M."/>
            <person name="Hotuta T."/>
            <person name="Kusano J."/>
            <person name="Kanehori K."/>
            <person name="Takahashi-Fujii A."/>
            <person name="Hara H."/>
            <person name="Tanase T.-O."/>
            <person name="Nomura Y."/>
            <person name="Togiya S."/>
            <person name="Komai F."/>
            <person name="Hara R."/>
            <person name="Takeuchi K."/>
            <person name="Arita M."/>
            <person name="Imose N."/>
            <person name="Musashino K."/>
            <person name="Yuuki H."/>
            <person name="Oshima A."/>
            <person name="Sasaki N."/>
            <person name="Aotsuka S."/>
            <person name="Yoshikawa Y."/>
            <person name="Matsunawa H."/>
            <person name="Ichihara T."/>
            <person name="Shiohata N."/>
            <person name="Sano S."/>
            <person name="Moriya S."/>
            <person name="Momiyama H."/>
            <person name="Satoh N."/>
            <person name="Takami S."/>
            <person name="Terashima Y."/>
            <person name="Suzuki O."/>
            <person name="Nakagawa S."/>
            <person name="Senoh A."/>
            <person name="Mizoguchi H."/>
            <person name="Goto Y."/>
            <person name="Shimizu F."/>
            <person name="Wakebe H."/>
            <person name="Hishigaki H."/>
            <person name="Watanabe T."/>
            <person name="Sugiyama A."/>
            <person name="Takemoto M."/>
            <person name="Kawakami B."/>
            <person name="Yamazaki M."/>
            <person name="Watanabe K."/>
            <person name="Kumagai A."/>
            <person name="Itakura S."/>
            <person name="Fukuzumi Y."/>
            <person name="Fujimori Y."/>
            <person name="Komiyama M."/>
            <person name="Tashiro H."/>
            <person name="Tanigami A."/>
            <person name="Fujiwara T."/>
            <person name="Ono T."/>
            <person name="Yamada K."/>
            <person name="Fujii Y."/>
            <person name="Ozaki K."/>
            <person name="Hirao M."/>
            <person name="Ohmori Y."/>
            <person name="Kawabata A."/>
            <person name="Hikiji T."/>
            <person name="Kobatake N."/>
            <person name="Inagaki H."/>
            <person name="Ikema Y."/>
            <person name="Okamoto S."/>
            <person name="Okitani R."/>
            <person name="Kawakami T."/>
            <person name="Noguchi S."/>
            <person name="Itoh T."/>
            <person name="Shigeta K."/>
            <person name="Senba T."/>
            <person name="Matsumura K."/>
            <person name="Nakajima Y."/>
            <person name="Mizuno T."/>
            <person name="Morinaga M."/>
            <person name="Sasaki M."/>
            <person name="Togashi T."/>
            <person name="Oyama M."/>
            <person name="Hata H."/>
            <person name="Watanabe M."/>
            <person name="Komatsu T."/>
            <person name="Mizushima-Sugano J."/>
            <person name="Satoh T."/>
            <person name="Shirai Y."/>
            <person name="Takahashi Y."/>
            <person name="Nakagawa K."/>
            <person name="Okumura K."/>
            <person name="Nagase T."/>
            <person name="Nomura N."/>
            <person name="Kikuchi H."/>
            <person name="Masuho Y."/>
            <person name="Yamashita R."/>
            <person name="Nakai K."/>
            <person name="Yada T."/>
            <person name="Nakamura Y."/>
            <person name="Ohara O."/>
            <person name="Isogai T."/>
            <person name="Sugano S."/>
        </authorList>
    </citation>
    <scope>NUCLEOTIDE SEQUENCE [LARGE SCALE MRNA]</scope>
    <source>
        <tissue>Hippocampus</tissue>
    </source>
</reference>
<reference key="2">
    <citation type="journal article" date="2005" name="Nature">
        <title>Generation and annotation of the DNA sequences of human chromosomes 2 and 4.</title>
        <authorList>
            <person name="Hillier L.W."/>
            <person name="Graves T.A."/>
            <person name="Fulton R.S."/>
            <person name="Fulton L.A."/>
            <person name="Pepin K.H."/>
            <person name="Minx P."/>
            <person name="Wagner-McPherson C."/>
            <person name="Layman D."/>
            <person name="Wylie K."/>
            <person name="Sekhon M."/>
            <person name="Becker M.C."/>
            <person name="Fewell G.A."/>
            <person name="Delehaunty K.D."/>
            <person name="Miner T.L."/>
            <person name="Nash W.E."/>
            <person name="Kremitzki C."/>
            <person name="Oddy L."/>
            <person name="Du H."/>
            <person name="Sun H."/>
            <person name="Bradshaw-Cordum H."/>
            <person name="Ali J."/>
            <person name="Carter J."/>
            <person name="Cordes M."/>
            <person name="Harris A."/>
            <person name="Isak A."/>
            <person name="van Brunt A."/>
            <person name="Nguyen C."/>
            <person name="Du F."/>
            <person name="Courtney L."/>
            <person name="Kalicki J."/>
            <person name="Ozersky P."/>
            <person name="Abbott S."/>
            <person name="Armstrong J."/>
            <person name="Belter E.A."/>
            <person name="Caruso L."/>
            <person name="Cedroni M."/>
            <person name="Cotton M."/>
            <person name="Davidson T."/>
            <person name="Desai A."/>
            <person name="Elliott G."/>
            <person name="Erb T."/>
            <person name="Fronick C."/>
            <person name="Gaige T."/>
            <person name="Haakenson W."/>
            <person name="Haglund K."/>
            <person name="Holmes A."/>
            <person name="Harkins R."/>
            <person name="Kim K."/>
            <person name="Kruchowski S.S."/>
            <person name="Strong C.M."/>
            <person name="Grewal N."/>
            <person name="Goyea E."/>
            <person name="Hou S."/>
            <person name="Levy A."/>
            <person name="Martinka S."/>
            <person name="Mead K."/>
            <person name="McLellan M.D."/>
            <person name="Meyer R."/>
            <person name="Randall-Maher J."/>
            <person name="Tomlinson C."/>
            <person name="Dauphin-Kohlberg S."/>
            <person name="Kozlowicz-Reilly A."/>
            <person name="Shah N."/>
            <person name="Swearengen-Shahid S."/>
            <person name="Snider J."/>
            <person name="Strong J.T."/>
            <person name="Thompson J."/>
            <person name="Yoakum M."/>
            <person name="Leonard S."/>
            <person name="Pearman C."/>
            <person name="Trani L."/>
            <person name="Radionenko M."/>
            <person name="Waligorski J.E."/>
            <person name="Wang C."/>
            <person name="Rock S.M."/>
            <person name="Tin-Wollam A.-M."/>
            <person name="Maupin R."/>
            <person name="Latreille P."/>
            <person name="Wendl M.C."/>
            <person name="Yang S.-P."/>
            <person name="Pohl C."/>
            <person name="Wallis J.W."/>
            <person name="Spieth J."/>
            <person name="Bieri T.A."/>
            <person name="Berkowicz N."/>
            <person name="Nelson J.O."/>
            <person name="Osborne J."/>
            <person name="Ding L."/>
            <person name="Meyer R."/>
            <person name="Sabo A."/>
            <person name="Shotland Y."/>
            <person name="Sinha P."/>
            <person name="Wohldmann P.E."/>
            <person name="Cook L.L."/>
            <person name="Hickenbotham M.T."/>
            <person name="Eldred J."/>
            <person name="Williams D."/>
            <person name="Jones T.A."/>
            <person name="She X."/>
            <person name="Ciccarelli F.D."/>
            <person name="Izaurralde E."/>
            <person name="Taylor J."/>
            <person name="Schmutz J."/>
            <person name="Myers R.M."/>
            <person name="Cox D.R."/>
            <person name="Huang X."/>
            <person name="McPherson J.D."/>
            <person name="Mardis E.R."/>
            <person name="Clifton S.W."/>
            <person name="Warren W.C."/>
            <person name="Chinwalla A.T."/>
            <person name="Eddy S.R."/>
            <person name="Marra M.A."/>
            <person name="Ovcharenko I."/>
            <person name="Furey T.S."/>
            <person name="Miller W."/>
            <person name="Eichler E.E."/>
            <person name="Bork P."/>
            <person name="Suyama M."/>
            <person name="Torrents D."/>
            <person name="Waterston R.H."/>
            <person name="Wilson R.K."/>
        </authorList>
    </citation>
    <scope>NUCLEOTIDE SEQUENCE [LARGE SCALE GENOMIC DNA]</scope>
</reference>
<proteinExistence type="uncertain"/>
<feature type="chain" id="PRO_0000416814" description="Putative uncharacterized protein LINC02898">
    <location>
        <begin position="1"/>
        <end position="131"/>
    </location>
</feature>
<feature type="region of interest" description="Disordered" evidence="1">
    <location>
        <begin position="60"/>
        <end position="100"/>
    </location>
</feature>
<feature type="compositionally biased region" description="Polar residues" evidence="1">
    <location>
        <begin position="91"/>
        <end position="100"/>
    </location>
</feature>
<sequence length="131" mass="14825">MVRMSRPLFLDWAWRPLCSPSQSLPLTYGPEGWILQWKGTCRQQTALHCPFDFPQAPLRGRHTLSQVPNKGHEKASAVQLPEKQGTDQSRRGPTSAVTKARTSYPESETFIVYLCSYFWNSSKGVYMSGST</sequence>
<name>CB091_HUMAN</name>
<accession>Q6ZV80</accession>